<dbReference type="EMBL" id="BC098714">
    <property type="protein sequence ID" value="AAH98714.1"/>
    <property type="molecule type" value="mRNA"/>
</dbReference>
<dbReference type="RefSeq" id="NP_001034097.1">
    <property type="nucleotide sequence ID" value="NM_001039008.1"/>
</dbReference>
<dbReference type="RefSeq" id="XP_063141839.1">
    <property type="nucleotide sequence ID" value="XM_063285769.1"/>
</dbReference>
<dbReference type="FunCoup" id="Q4G068">
    <property type="interactions" value="43"/>
</dbReference>
<dbReference type="STRING" id="10116.ENSRNOP00000048649"/>
<dbReference type="PhosphoSitePlus" id="Q4G068"/>
<dbReference type="PaxDb" id="10116-ENSRNOP00000048649"/>
<dbReference type="Ensembl" id="ENSRNOT00000049891.5">
    <property type="protein sequence ID" value="ENSRNOP00000048649.2"/>
    <property type="gene ID" value="ENSRNOG00000023708.7"/>
</dbReference>
<dbReference type="GeneID" id="297077"/>
<dbReference type="KEGG" id="rno:297077"/>
<dbReference type="AGR" id="RGD:1310725"/>
<dbReference type="CTD" id="55365"/>
<dbReference type="RGD" id="1310725">
    <property type="gene designation" value="Tmem176a"/>
</dbReference>
<dbReference type="eggNOG" id="ENOG502SF8T">
    <property type="taxonomic scope" value="Eukaryota"/>
</dbReference>
<dbReference type="GeneTree" id="ENSGT00530000064074"/>
<dbReference type="HOGENOM" id="CLU_090530_1_0_1"/>
<dbReference type="InParanoid" id="Q4G068"/>
<dbReference type="OMA" id="KQGGICW"/>
<dbReference type="OrthoDB" id="92089at9989"/>
<dbReference type="PhylomeDB" id="Q4G068"/>
<dbReference type="TreeFam" id="TF335389"/>
<dbReference type="PRO" id="PR:Q4G068"/>
<dbReference type="Proteomes" id="UP000002494">
    <property type="component" value="Chromosome 4"/>
</dbReference>
<dbReference type="Bgee" id="ENSRNOG00000023708">
    <property type="expression patterns" value="Expressed in liver and 20 other cell types or tissues"/>
</dbReference>
<dbReference type="GO" id="GO:0016020">
    <property type="term" value="C:membrane"/>
    <property type="evidence" value="ECO:0007669"/>
    <property type="project" value="UniProtKB-SubCell"/>
</dbReference>
<dbReference type="GO" id="GO:2001199">
    <property type="term" value="P:negative regulation of dendritic cell differentiation"/>
    <property type="evidence" value="ECO:0000266"/>
    <property type="project" value="RGD"/>
</dbReference>
<dbReference type="InterPro" id="IPR007237">
    <property type="entry name" value="CD20-like"/>
</dbReference>
<dbReference type="InterPro" id="IPR009281">
    <property type="entry name" value="TMEM176A/TMEM176B"/>
</dbReference>
<dbReference type="PANTHER" id="PTHR15756">
    <property type="entry name" value="LR8/HCA112"/>
    <property type="match status" value="1"/>
</dbReference>
<dbReference type="PANTHER" id="PTHR15756:SF6">
    <property type="entry name" value="TRANSMEMBRANE PROTEIN 176A"/>
    <property type="match status" value="1"/>
</dbReference>
<dbReference type="Pfam" id="PF04103">
    <property type="entry name" value="CD20"/>
    <property type="match status" value="1"/>
</dbReference>
<sequence>MSTDMGTADVGEVDPEAPQPTNIEVHIHQESVLAKLLLAGCSFLRVPASASTQSQGSSRVLVASWVVQIVLGILSVVLGGILYICHYLAMNTQGAPFWTGIVAMLAGAVAFLQKKRGGTCWALMRILLVLASFCTAVAAIVIGSREFNNYWYYLRDDVCKSDTSYRWSTMPSITPVPEEANRIGLCKYYTSMLKTLLISLQAMLLGVWVLLLLASLIPVCVYLWKRFFTKAETEKKLLGAAVI</sequence>
<proteinExistence type="evidence at transcript level"/>
<reference key="1">
    <citation type="journal article" date="2004" name="Genome Res.">
        <title>The status, quality, and expansion of the NIH full-length cDNA project: the Mammalian Gene Collection (MGC).</title>
        <authorList>
            <consortium name="The MGC Project Team"/>
        </authorList>
    </citation>
    <scope>NUCLEOTIDE SEQUENCE [LARGE SCALE MRNA]</scope>
    <source>
        <tissue>Liver</tissue>
    </source>
</reference>
<organism>
    <name type="scientific">Rattus norvegicus</name>
    <name type="common">Rat</name>
    <dbReference type="NCBI Taxonomy" id="10116"/>
    <lineage>
        <taxon>Eukaryota</taxon>
        <taxon>Metazoa</taxon>
        <taxon>Chordata</taxon>
        <taxon>Craniata</taxon>
        <taxon>Vertebrata</taxon>
        <taxon>Euteleostomi</taxon>
        <taxon>Mammalia</taxon>
        <taxon>Eutheria</taxon>
        <taxon>Euarchontoglires</taxon>
        <taxon>Glires</taxon>
        <taxon>Rodentia</taxon>
        <taxon>Myomorpha</taxon>
        <taxon>Muroidea</taxon>
        <taxon>Muridae</taxon>
        <taxon>Murinae</taxon>
        <taxon>Rattus</taxon>
    </lineage>
</organism>
<name>T176A_RAT</name>
<comment type="subunit">
    <text evidence="1">Interacts with MCOLN2.</text>
</comment>
<comment type="subcellular location">
    <subcellularLocation>
        <location evidence="4">Membrane</location>
        <topology evidence="4">Multi-pass membrane protein</topology>
    </subcellularLocation>
</comment>
<comment type="similarity">
    <text evidence="4">Belongs to the TMEM176 family.</text>
</comment>
<keyword id="KW-0472">Membrane</keyword>
<keyword id="KW-0597">Phosphoprotein</keyword>
<keyword id="KW-1185">Reference proteome</keyword>
<keyword id="KW-0812">Transmembrane</keyword>
<keyword id="KW-1133">Transmembrane helix</keyword>
<evidence type="ECO:0000250" key="1">
    <source>
        <dbReference type="UniProtKB" id="Q96HP8"/>
    </source>
</evidence>
<evidence type="ECO:0000250" key="2">
    <source>
        <dbReference type="UniProtKB" id="Q9DCS1"/>
    </source>
</evidence>
<evidence type="ECO:0000255" key="3"/>
<evidence type="ECO:0000305" key="4"/>
<gene>
    <name type="primary">Tmem176a</name>
</gene>
<protein>
    <recommendedName>
        <fullName>Transmembrane protein 176A</fullName>
    </recommendedName>
</protein>
<feature type="chain" id="PRO_0000279874" description="Transmembrane protein 176A">
    <location>
        <begin position="1"/>
        <end position="243"/>
    </location>
</feature>
<feature type="transmembrane region" description="Helical" evidence="3">
    <location>
        <begin position="65"/>
        <end position="85"/>
    </location>
</feature>
<feature type="transmembrane region" description="Helical" evidence="3">
    <location>
        <begin position="92"/>
        <end position="112"/>
    </location>
</feature>
<feature type="transmembrane region" description="Helical" evidence="3">
    <location>
        <begin position="122"/>
        <end position="142"/>
    </location>
</feature>
<feature type="transmembrane region" description="Helical" evidence="3">
    <location>
        <begin position="204"/>
        <end position="224"/>
    </location>
</feature>
<feature type="modified residue" description="Phosphoserine" evidence="2">
    <location>
        <position position="42"/>
    </location>
</feature>
<accession>Q4G068</accession>